<evidence type="ECO:0000250" key="1"/>
<evidence type="ECO:0000305" key="2"/>
<keyword id="KW-0963">Cytoplasm</keyword>
<keyword id="KW-1015">Disulfide bond</keyword>
<keyword id="KW-0274">FAD</keyword>
<keyword id="KW-0285">Flavoprotein</keyword>
<keyword id="KW-0520">NAD</keyword>
<keyword id="KW-0560">Oxidoreductase</keyword>
<keyword id="KW-0676">Redox-active center</keyword>
<keyword id="KW-1185">Reference proteome</keyword>
<name>DLDH_HALSA</name>
<gene>
    <name type="primary">lpdA</name>
    <name type="ordered locus">VNG_2220G</name>
</gene>
<proteinExistence type="inferred from homology"/>
<reference key="1">
    <citation type="journal article" date="2000" name="Proc. Natl. Acad. Sci. U.S.A.">
        <title>Genome sequence of Halobacterium species NRC-1.</title>
        <authorList>
            <person name="Ng W.V."/>
            <person name="Kennedy S.P."/>
            <person name="Mahairas G.G."/>
            <person name="Berquist B."/>
            <person name="Pan M."/>
            <person name="Shukla H.D."/>
            <person name="Lasky S.R."/>
            <person name="Baliga N.S."/>
            <person name="Thorsson V."/>
            <person name="Sbrogna J."/>
            <person name="Swartzell S."/>
            <person name="Weir D."/>
            <person name="Hall J."/>
            <person name="Dahl T.A."/>
            <person name="Welti R."/>
            <person name="Goo Y.A."/>
            <person name="Leithauser B."/>
            <person name="Keller K."/>
            <person name="Cruz R."/>
            <person name="Danson M.J."/>
            <person name="Hough D.W."/>
            <person name="Maddocks D.G."/>
            <person name="Jablonski P.E."/>
            <person name="Krebs M.P."/>
            <person name="Angevine C.M."/>
            <person name="Dale H."/>
            <person name="Isenbarger T.A."/>
            <person name="Peck R.F."/>
            <person name="Pohlschroder M."/>
            <person name="Spudich J.L."/>
            <person name="Jung K.-H."/>
            <person name="Alam M."/>
            <person name="Freitas T."/>
            <person name="Hou S."/>
            <person name="Daniels C.J."/>
            <person name="Dennis P.P."/>
            <person name="Omer A.D."/>
            <person name="Ebhardt H."/>
            <person name="Lowe T.M."/>
            <person name="Liang P."/>
            <person name="Riley M."/>
            <person name="Hood L."/>
            <person name="DasSarma S."/>
        </authorList>
    </citation>
    <scope>NUCLEOTIDE SEQUENCE [LARGE SCALE GENOMIC DNA]</scope>
    <source>
        <strain>ATCC 700922 / JCM 11081 / NRC-1</strain>
    </source>
</reference>
<accession>Q9HN74</accession>
<comment type="catalytic activity">
    <reaction>
        <text>N(6)-[(R)-dihydrolipoyl]-L-lysyl-[protein] + NAD(+) = N(6)-[(R)-lipoyl]-L-lysyl-[protein] + NADH + H(+)</text>
        <dbReference type="Rhea" id="RHEA:15045"/>
        <dbReference type="Rhea" id="RHEA-COMP:10474"/>
        <dbReference type="Rhea" id="RHEA-COMP:10475"/>
        <dbReference type="ChEBI" id="CHEBI:15378"/>
        <dbReference type="ChEBI" id="CHEBI:57540"/>
        <dbReference type="ChEBI" id="CHEBI:57945"/>
        <dbReference type="ChEBI" id="CHEBI:83099"/>
        <dbReference type="ChEBI" id="CHEBI:83100"/>
        <dbReference type="EC" id="1.8.1.4"/>
    </reaction>
</comment>
<comment type="cofactor">
    <cofactor evidence="1">
        <name>FAD</name>
        <dbReference type="ChEBI" id="CHEBI:57692"/>
    </cofactor>
    <text evidence="1">Binds 1 FAD per subunit.</text>
</comment>
<comment type="subunit">
    <text evidence="1">Homodimer.</text>
</comment>
<comment type="subcellular location">
    <subcellularLocation>
        <location evidence="1">Cytoplasm</location>
    </subcellularLocation>
</comment>
<comment type="miscellaneous">
    <text evidence="1">The active site is a redox-active disulfide bond.</text>
</comment>
<comment type="similarity">
    <text evidence="2">Belongs to the class-I pyridine nucleotide-disulfide oxidoreductase family.</text>
</comment>
<sequence length="474" mass="49151">MVVGDISTGTDVAVVGAGPGGYVAAIRAGQLGLDVTLVEKDAYGGTCLNYGCIPSKAMITASGVAHEAGHAEEMGVYADPDVDVAEMVDWKDGVVDQLTGGVEKLCKANGVNLIEGRAEFAGSDKLRVVHGGDGQGSETIEYEHAIVSTGSRPIEVPGFDFGDDPVLDSRQALAMAELPSSMVIVGGGYIGMELSTVFAKLGVDVTVVEMLDGILPQYGDDIARPVRQRAEELGIDFHFGLAADSWTDTDDGIVVTAADEDGEETEFETEKVLVAVGRQPVTDTLNLDAVGLEPNDDGRLETDHEARTDVENVFAIGDVAPGPMLAHKASKEGEVAAEVIAGEPAALDYQAVPAAVFTDPEIGTVGLTEDDAAAQGFDPVVGTFPFNASGRALTTGHDDGFVEVVADEESGFLLGAQIVGPEASELVAELGLAIEMGATLEDVASTIHTHPTLSEATMEAAEHALGHAVHTLNR</sequence>
<protein>
    <recommendedName>
        <fullName>Dihydrolipoyl dehydrogenase</fullName>
        <ecNumber>1.8.1.4</ecNumber>
    </recommendedName>
    <alternativeName>
        <fullName>Dihydrolipoamide dehydrogenase</fullName>
    </alternativeName>
</protein>
<dbReference type="EC" id="1.8.1.4"/>
<dbReference type="EMBL" id="AE004437">
    <property type="protein sequence ID" value="AAG20347.1"/>
    <property type="molecule type" value="Genomic_DNA"/>
</dbReference>
<dbReference type="PIR" id="G84372">
    <property type="entry name" value="G84372"/>
</dbReference>
<dbReference type="RefSeq" id="WP_010903648.1">
    <property type="nucleotide sequence ID" value="NC_002607.1"/>
</dbReference>
<dbReference type="SMR" id="Q9HN74"/>
<dbReference type="STRING" id="64091.VNG_2220G"/>
<dbReference type="PaxDb" id="64091-VNG_2220G"/>
<dbReference type="GeneID" id="68694778"/>
<dbReference type="KEGG" id="hal:VNG_2220G"/>
<dbReference type="PATRIC" id="fig|64091.14.peg.1707"/>
<dbReference type="HOGENOM" id="CLU_016755_0_1_2"/>
<dbReference type="InParanoid" id="Q9HN74"/>
<dbReference type="OrthoDB" id="27922at2157"/>
<dbReference type="PhylomeDB" id="Q9HN74"/>
<dbReference type="Proteomes" id="UP000000554">
    <property type="component" value="Chromosome"/>
</dbReference>
<dbReference type="GO" id="GO:0005737">
    <property type="term" value="C:cytoplasm"/>
    <property type="evidence" value="ECO:0007669"/>
    <property type="project" value="UniProtKB-SubCell"/>
</dbReference>
<dbReference type="GO" id="GO:0004148">
    <property type="term" value="F:dihydrolipoyl dehydrogenase (NADH) activity"/>
    <property type="evidence" value="ECO:0000318"/>
    <property type="project" value="GO_Central"/>
</dbReference>
<dbReference type="GO" id="GO:0050660">
    <property type="term" value="F:flavin adenine dinucleotide binding"/>
    <property type="evidence" value="ECO:0000318"/>
    <property type="project" value="GO_Central"/>
</dbReference>
<dbReference type="GO" id="GO:0006103">
    <property type="term" value="P:2-oxoglutarate metabolic process"/>
    <property type="evidence" value="ECO:0000318"/>
    <property type="project" value="GO_Central"/>
</dbReference>
<dbReference type="GO" id="GO:0006090">
    <property type="term" value="P:pyruvate metabolic process"/>
    <property type="evidence" value="ECO:0000318"/>
    <property type="project" value="GO_Central"/>
</dbReference>
<dbReference type="FunFam" id="3.30.390.30:FF:000001">
    <property type="entry name" value="Dihydrolipoyl dehydrogenase"/>
    <property type="match status" value="1"/>
</dbReference>
<dbReference type="Gene3D" id="3.30.390.30">
    <property type="match status" value="1"/>
</dbReference>
<dbReference type="Gene3D" id="3.50.50.60">
    <property type="entry name" value="FAD/NAD(P)-binding domain"/>
    <property type="match status" value="2"/>
</dbReference>
<dbReference type="InterPro" id="IPR050151">
    <property type="entry name" value="Class-I_Pyr_Nuc-Dis_Oxidored"/>
</dbReference>
<dbReference type="InterPro" id="IPR036188">
    <property type="entry name" value="FAD/NAD-bd_sf"/>
</dbReference>
<dbReference type="InterPro" id="IPR023753">
    <property type="entry name" value="FAD/NAD-binding_dom"/>
</dbReference>
<dbReference type="InterPro" id="IPR016156">
    <property type="entry name" value="FAD/NAD-linked_Rdtase_dimer_sf"/>
</dbReference>
<dbReference type="InterPro" id="IPR006258">
    <property type="entry name" value="Lipoamide_DH"/>
</dbReference>
<dbReference type="InterPro" id="IPR001100">
    <property type="entry name" value="Pyr_nuc-diS_OxRdtase"/>
</dbReference>
<dbReference type="InterPro" id="IPR004099">
    <property type="entry name" value="Pyr_nucl-diS_OxRdtase_dimer"/>
</dbReference>
<dbReference type="InterPro" id="IPR012999">
    <property type="entry name" value="Pyr_OxRdtase_I_AS"/>
</dbReference>
<dbReference type="NCBIfam" id="TIGR01350">
    <property type="entry name" value="lipoamide_DH"/>
    <property type="match status" value="1"/>
</dbReference>
<dbReference type="PANTHER" id="PTHR22912:SF160">
    <property type="entry name" value="DIHYDROLIPOYL DEHYDROGENASE"/>
    <property type="match status" value="1"/>
</dbReference>
<dbReference type="PANTHER" id="PTHR22912">
    <property type="entry name" value="DISULFIDE OXIDOREDUCTASE"/>
    <property type="match status" value="1"/>
</dbReference>
<dbReference type="Pfam" id="PF07992">
    <property type="entry name" value="Pyr_redox_2"/>
    <property type="match status" value="1"/>
</dbReference>
<dbReference type="Pfam" id="PF02852">
    <property type="entry name" value="Pyr_redox_dim"/>
    <property type="match status" value="1"/>
</dbReference>
<dbReference type="PIRSF" id="PIRSF000350">
    <property type="entry name" value="Mercury_reductase_MerA"/>
    <property type="match status" value="1"/>
</dbReference>
<dbReference type="PRINTS" id="PR00368">
    <property type="entry name" value="FADPNR"/>
</dbReference>
<dbReference type="PRINTS" id="PR00411">
    <property type="entry name" value="PNDRDTASEI"/>
</dbReference>
<dbReference type="SUPFAM" id="SSF51905">
    <property type="entry name" value="FAD/NAD(P)-binding domain"/>
    <property type="match status" value="1"/>
</dbReference>
<dbReference type="SUPFAM" id="SSF55424">
    <property type="entry name" value="FAD/NAD-linked reductases, dimerisation (C-terminal) domain"/>
    <property type="match status" value="1"/>
</dbReference>
<dbReference type="PROSITE" id="PS00076">
    <property type="entry name" value="PYRIDINE_REDOX_1"/>
    <property type="match status" value="1"/>
</dbReference>
<feature type="chain" id="PRO_0000068057" description="Dihydrolipoyl dehydrogenase">
    <location>
        <begin position="1"/>
        <end position="474"/>
    </location>
</feature>
<feature type="active site" description="Proton acceptor" evidence="1">
    <location>
        <position position="450"/>
    </location>
</feature>
<feature type="binding site" evidence="1">
    <location>
        <begin position="39"/>
        <end position="47"/>
    </location>
    <ligand>
        <name>FAD</name>
        <dbReference type="ChEBI" id="CHEBI:57692"/>
    </ligand>
</feature>
<feature type="binding site" evidence="1">
    <location>
        <position position="56"/>
    </location>
    <ligand>
        <name>FAD</name>
        <dbReference type="ChEBI" id="CHEBI:57692"/>
    </ligand>
</feature>
<feature type="binding site" evidence="1">
    <location>
        <position position="118"/>
    </location>
    <ligand>
        <name>FAD</name>
        <dbReference type="ChEBI" id="CHEBI:57692"/>
    </ligand>
</feature>
<feature type="binding site" evidence="1">
    <location>
        <begin position="186"/>
        <end position="190"/>
    </location>
    <ligand>
        <name>NAD(+)</name>
        <dbReference type="ChEBI" id="CHEBI:57540"/>
    </ligand>
</feature>
<feature type="binding site" evidence="1">
    <location>
        <position position="209"/>
    </location>
    <ligand>
        <name>NAD(+)</name>
        <dbReference type="ChEBI" id="CHEBI:57540"/>
    </ligand>
</feature>
<feature type="binding site" evidence="1">
    <location>
        <begin position="275"/>
        <end position="278"/>
    </location>
    <ligand>
        <name>NAD(+)</name>
        <dbReference type="ChEBI" id="CHEBI:57540"/>
    </ligand>
</feature>
<feature type="binding site" evidence="1">
    <location>
        <position position="318"/>
    </location>
    <ligand>
        <name>FAD</name>
        <dbReference type="ChEBI" id="CHEBI:57692"/>
    </ligand>
</feature>
<feature type="binding site" evidence="1">
    <location>
        <position position="326"/>
    </location>
    <ligand>
        <name>FAD</name>
        <dbReference type="ChEBI" id="CHEBI:57692"/>
    </ligand>
</feature>
<feature type="disulfide bond" description="Redox-active" evidence="1">
    <location>
        <begin position="47"/>
        <end position="52"/>
    </location>
</feature>
<organism>
    <name type="scientific">Halobacterium salinarum (strain ATCC 700922 / JCM 11081 / NRC-1)</name>
    <name type="common">Halobacterium halobium</name>
    <dbReference type="NCBI Taxonomy" id="64091"/>
    <lineage>
        <taxon>Archaea</taxon>
        <taxon>Methanobacteriati</taxon>
        <taxon>Methanobacteriota</taxon>
        <taxon>Stenosarchaea group</taxon>
        <taxon>Halobacteria</taxon>
        <taxon>Halobacteriales</taxon>
        <taxon>Halobacteriaceae</taxon>
        <taxon>Halobacterium</taxon>
        <taxon>Halobacterium salinarum NRC-34001</taxon>
    </lineage>
</organism>